<name>SPLC_STAAE</name>
<sequence>MNKNIVIKSMAALAILTSVTGINAAVVEETQQIANAEKNVTQVKDTNIFPYNGVVSFKDATGFVIGKNTIITNKHVSKDYKVGDRITAHPNGDKGNGGIYKIKSISDYPGDEDISVMNIEEQAVERGPKGFNFNENVQAFNFAKDAKVDDKIKVIGYPLPAQNSFKQFESTGTIKRIKDNILNFDAYIEPGNSGSPVLNSNNEVIGVVYGGIGKIGSEYNGAVYFTPQIKDFIQKHIEQ</sequence>
<gene>
    <name type="primary">splC</name>
    <name type="ordered locus">NWMN_1704</name>
</gene>
<accession>A6QHZ4</accession>
<feature type="signal peptide" evidence="1">
    <location>
        <begin position="1"/>
        <end position="36"/>
    </location>
</feature>
<feature type="chain" id="PRO_0000359561" description="Serine protease SplC">
    <location>
        <begin position="37"/>
        <end position="239"/>
    </location>
</feature>
<feature type="active site" description="Charge relay system" evidence="1">
    <location>
        <position position="75"/>
    </location>
</feature>
<feature type="active site" description="Charge relay system" evidence="1">
    <location>
        <position position="113"/>
    </location>
</feature>
<feature type="active site" description="Charge relay system" evidence="1">
    <location>
        <position position="193"/>
    </location>
</feature>
<dbReference type="EC" id="3.4.21.-"/>
<dbReference type="EMBL" id="AP009351">
    <property type="protein sequence ID" value="BAF67976.1"/>
    <property type="molecule type" value="Genomic_DNA"/>
</dbReference>
<dbReference type="RefSeq" id="WP_001038867.1">
    <property type="nucleotide sequence ID" value="NZ_JBBIAE010000013.1"/>
</dbReference>
<dbReference type="SMR" id="A6QHZ4"/>
<dbReference type="MEROPS" id="S01.283"/>
<dbReference type="KEGG" id="sae:NWMN_1704"/>
<dbReference type="HOGENOM" id="CLU_073589_2_0_9"/>
<dbReference type="Proteomes" id="UP000006386">
    <property type="component" value="Chromosome"/>
</dbReference>
<dbReference type="GO" id="GO:0005576">
    <property type="term" value="C:extracellular region"/>
    <property type="evidence" value="ECO:0007669"/>
    <property type="project" value="UniProtKB-SubCell"/>
</dbReference>
<dbReference type="GO" id="GO:0004252">
    <property type="term" value="F:serine-type endopeptidase activity"/>
    <property type="evidence" value="ECO:0007669"/>
    <property type="project" value="InterPro"/>
</dbReference>
<dbReference type="GO" id="GO:0006508">
    <property type="term" value="P:proteolysis"/>
    <property type="evidence" value="ECO:0007669"/>
    <property type="project" value="UniProtKB-KW"/>
</dbReference>
<dbReference type="Gene3D" id="2.40.10.10">
    <property type="entry name" value="Trypsin-like serine proteases"/>
    <property type="match status" value="2"/>
</dbReference>
<dbReference type="InterPro" id="IPR009003">
    <property type="entry name" value="Peptidase_S1_PA"/>
</dbReference>
<dbReference type="InterPro" id="IPR043504">
    <property type="entry name" value="Peptidase_S1_PA_chymotrypsin"/>
</dbReference>
<dbReference type="InterPro" id="IPR008256">
    <property type="entry name" value="Peptidase_S1B"/>
</dbReference>
<dbReference type="InterPro" id="IPR008353">
    <property type="entry name" value="Peptidase_S1B_tx"/>
</dbReference>
<dbReference type="InterPro" id="IPR001254">
    <property type="entry name" value="Trypsin_dom"/>
</dbReference>
<dbReference type="InterPro" id="IPR028301">
    <property type="entry name" value="V8_his_AS"/>
</dbReference>
<dbReference type="PANTHER" id="PTHR43019:SF23">
    <property type="entry name" value="PROTEASE DO-LIKE 5, CHLOROPLASTIC"/>
    <property type="match status" value="1"/>
</dbReference>
<dbReference type="PANTHER" id="PTHR43019">
    <property type="entry name" value="SERINE ENDOPROTEASE DEGS"/>
    <property type="match status" value="1"/>
</dbReference>
<dbReference type="Pfam" id="PF00089">
    <property type="entry name" value="Trypsin"/>
    <property type="match status" value="1"/>
</dbReference>
<dbReference type="PRINTS" id="PR01774">
    <property type="entry name" value="EXFOLTOXIN"/>
</dbReference>
<dbReference type="PRINTS" id="PR00839">
    <property type="entry name" value="V8PROTEASE"/>
</dbReference>
<dbReference type="SUPFAM" id="SSF50494">
    <property type="entry name" value="Trypsin-like serine proteases"/>
    <property type="match status" value="1"/>
</dbReference>
<dbReference type="PROSITE" id="PS00672">
    <property type="entry name" value="V8_HIS"/>
    <property type="match status" value="1"/>
</dbReference>
<reference key="1">
    <citation type="journal article" date="2008" name="J. Bacteriol.">
        <title>Genome sequence of Staphylococcus aureus strain Newman and comparative analysis of staphylococcal genomes: polymorphism and evolution of two major pathogenicity islands.</title>
        <authorList>
            <person name="Baba T."/>
            <person name="Bae T."/>
            <person name="Schneewind O."/>
            <person name="Takeuchi F."/>
            <person name="Hiramatsu K."/>
        </authorList>
    </citation>
    <scope>NUCLEOTIDE SEQUENCE [LARGE SCALE GENOMIC DNA]</scope>
    <source>
        <strain>Newman</strain>
    </source>
</reference>
<protein>
    <recommendedName>
        <fullName>Serine protease SplC</fullName>
        <ecNumber>3.4.21.-</ecNumber>
    </recommendedName>
</protein>
<evidence type="ECO:0000250" key="1"/>
<evidence type="ECO:0000305" key="2"/>
<proteinExistence type="inferred from homology"/>
<keyword id="KW-0378">Hydrolase</keyword>
<keyword id="KW-0645">Protease</keyword>
<keyword id="KW-0964">Secreted</keyword>
<keyword id="KW-0720">Serine protease</keyword>
<keyword id="KW-0732">Signal</keyword>
<organism>
    <name type="scientific">Staphylococcus aureus (strain Newman)</name>
    <dbReference type="NCBI Taxonomy" id="426430"/>
    <lineage>
        <taxon>Bacteria</taxon>
        <taxon>Bacillati</taxon>
        <taxon>Bacillota</taxon>
        <taxon>Bacilli</taxon>
        <taxon>Bacillales</taxon>
        <taxon>Staphylococcaceae</taxon>
        <taxon>Staphylococcus</taxon>
    </lineage>
</organism>
<comment type="subcellular location">
    <subcellularLocation>
        <location evidence="1">Secreted</location>
    </subcellularLocation>
</comment>
<comment type="similarity">
    <text evidence="2">Belongs to the peptidase S1B family.</text>
</comment>